<protein>
    <recommendedName>
        <fullName evidence="1">Alkanesulfonate monooxygenase</fullName>
        <ecNumber evidence="1">1.14.14.5</ecNumber>
    </recommendedName>
    <alternativeName>
        <fullName evidence="1">FMNH2-dependent aliphatic sulfonate monooxygenase</fullName>
    </alternativeName>
</protein>
<gene>
    <name evidence="1" type="primary">ssuD</name>
    <name type="ordered locus">RPA2612</name>
</gene>
<dbReference type="EC" id="1.14.14.5" evidence="1"/>
<dbReference type="EMBL" id="BX572601">
    <property type="protein sequence ID" value="CAE28053.1"/>
    <property type="molecule type" value="Genomic_DNA"/>
</dbReference>
<dbReference type="RefSeq" id="WP_011158162.1">
    <property type="nucleotide sequence ID" value="NZ_CP116810.1"/>
</dbReference>
<dbReference type="SMR" id="Q6N6K3"/>
<dbReference type="STRING" id="258594.RPA2612"/>
<dbReference type="GeneID" id="66893683"/>
<dbReference type="eggNOG" id="COG2141">
    <property type="taxonomic scope" value="Bacteria"/>
</dbReference>
<dbReference type="HOGENOM" id="CLU_027853_1_0_5"/>
<dbReference type="PhylomeDB" id="Q6N6K3"/>
<dbReference type="GO" id="GO:0008726">
    <property type="term" value="F:alkanesulfonate monooxygenase activity"/>
    <property type="evidence" value="ECO:0007669"/>
    <property type="project" value="UniProtKB-UniRule"/>
</dbReference>
<dbReference type="GO" id="GO:0046306">
    <property type="term" value="P:alkanesulfonate catabolic process"/>
    <property type="evidence" value="ECO:0007669"/>
    <property type="project" value="TreeGrafter"/>
</dbReference>
<dbReference type="CDD" id="cd01094">
    <property type="entry name" value="Alkanesulfonate_monoxygenase"/>
    <property type="match status" value="1"/>
</dbReference>
<dbReference type="Gene3D" id="3.20.20.30">
    <property type="entry name" value="Luciferase-like domain"/>
    <property type="match status" value="1"/>
</dbReference>
<dbReference type="HAMAP" id="MF_01229">
    <property type="entry name" value="Alkanesulf_monooxygen"/>
    <property type="match status" value="1"/>
</dbReference>
<dbReference type="InterPro" id="IPR019911">
    <property type="entry name" value="Alkanesulphonate_mOase_FMN-dep"/>
</dbReference>
<dbReference type="InterPro" id="IPR011251">
    <property type="entry name" value="Luciferase-like_dom"/>
</dbReference>
<dbReference type="InterPro" id="IPR036661">
    <property type="entry name" value="Luciferase-like_sf"/>
</dbReference>
<dbReference type="InterPro" id="IPR050172">
    <property type="entry name" value="SsuD_RutA_monooxygenase"/>
</dbReference>
<dbReference type="NCBIfam" id="TIGR03565">
    <property type="entry name" value="alk_sulf_monoox"/>
    <property type="match status" value="1"/>
</dbReference>
<dbReference type="NCBIfam" id="NF001939">
    <property type="entry name" value="PRK00719.1"/>
    <property type="match status" value="1"/>
</dbReference>
<dbReference type="PANTHER" id="PTHR42847">
    <property type="entry name" value="ALKANESULFONATE MONOOXYGENASE"/>
    <property type="match status" value="1"/>
</dbReference>
<dbReference type="PANTHER" id="PTHR42847:SF4">
    <property type="entry name" value="ALKANESULFONATE MONOOXYGENASE-RELATED"/>
    <property type="match status" value="1"/>
</dbReference>
<dbReference type="Pfam" id="PF00296">
    <property type="entry name" value="Bac_luciferase"/>
    <property type="match status" value="1"/>
</dbReference>
<dbReference type="SUPFAM" id="SSF51679">
    <property type="entry name" value="Bacterial luciferase-like"/>
    <property type="match status" value="1"/>
</dbReference>
<feature type="chain" id="PRO_0000216719" description="Alkanesulfonate monooxygenase">
    <location>
        <begin position="1"/>
        <end position="391"/>
    </location>
</feature>
<reference key="1">
    <citation type="journal article" date="2004" name="Nat. Biotechnol.">
        <title>Complete genome sequence of the metabolically versatile photosynthetic bacterium Rhodopseudomonas palustris.</title>
        <authorList>
            <person name="Larimer F.W."/>
            <person name="Chain P."/>
            <person name="Hauser L."/>
            <person name="Lamerdin J.E."/>
            <person name="Malfatti S."/>
            <person name="Do L."/>
            <person name="Land M.L."/>
            <person name="Pelletier D.A."/>
            <person name="Beatty J.T."/>
            <person name="Lang A.S."/>
            <person name="Tabita F.R."/>
            <person name="Gibson J.L."/>
            <person name="Hanson T.E."/>
            <person name="Bobst C."/>
            <person name="Torres y Torres J.L."/>
            <person name="Peres C."/>
            <person name="Harrison F.H."/>
            <person name="Gibson J."/>
            <person name="Harwood C.S."/>
        </authorList>
    </citation>
    <scope>NUCLEOTIDE SEQUENCE [LARGE SCALE GENOMIC DNA]</scope>
    <source>
        <strain>ATCC BAA-98 / CGA009</strain>
    </source>
</reference>
<comment type="function">
    <text evidence="1">Catalyzes the desulfonation of aliphatic sulfonates.</text>
</comment>
<comment type="catalytic activity">
    <reaction evidence="1">
        <text>an alkanesulfonate + FMNH2 + O2 = an aldehyde + FMN + sulfite + H2O + 2 H(+)</text>
        <dbReference type="Rhea" id="RHEA:23064"/>
        <dbReference type="ChEBI" id="CHEBI:15377"/>
        <dbReference type="ChEBI" id="CHEBI:15378"/>
        <dbReference type="ChEBI" id="CHEBI:15379"/>
        <dbReference type="ChEBI" id="CHEBI:17359"/>
        <dbReference type="ChEBI" id="CHEBI:17478"/>
        <dbReference type="ChEBI" id="CHEBI:57618"/>
        <dbReference type="ChEBI" id="CHEBI:58210"/>
        <dbReference type="ChEBI" id="CHEBI:134249"/>
        <dbReference type="EC" id="1.14.14.5"/>
    </reaction>
</comment>
<comment type="similarity">
    <text evidence="1">Belongs to the SsuD family.</text>
</comment>
<name>SSUD_RHOPA</name>
<accession>Q6N6K3</accession>
<sequence>MTAPQTPSSNFLWFLPTHGDGHYLGTSNGGRDVNFGYLRQIAQAADQLGYFGVLLPTGRSCEDSWVVASAVAPWTERLRYLVAVRPGLQSPSVAARMTATLDRLIGGRLLVNVVTGGDPVENKGDGVFLSHDERYEVTREFLNVYSDLLSGKTVNVAGKHITIEDGRLLFPPVQSPRPPLYFGGSSDAGIDVAADTVDKYLTWGEPPAQVAEKVNRVRAVAEQRGRKLSFGIRLHVIVRETNEAAWAAADDLIRYVTDDTIAAAQKVFARMDSVGQQRMSELHGGRRDKLEISPNLWAGVGLVRGGAGTALVGDPQTVAARIKEYQDVGIDTFILSGYPHLEEAYRFAELVFPLVKPQHAGNVTPLRANTGPFGETIANEHLPNAKQAVKP</sequence>
<organism>
    <name type="scientific">Rhodopseudomonas palustris (strain ATCC BAA-98 / CGA009)</name>
    <dbReference type="NCBI Taxonomy" id="258594"/>
    <lineage>
        <taxon>Bacteria</taxon>
        <taxon>Pseudomonadati</taxon>
        <taxon>Pseudomonadota</taxon>
        <taxon>Alphaproteobacteria</taxon>
        <taxon>Hyphomicrobiales</taxon>
        <taxon>Nitrobacteraceae</taxon>
        <taxon>Rhodopseudomonas</taxon>
    </lineage>
</organism>
<keyword id="KW-0285">Flavoprotein</keyword>
<keyword id="KW-0288">FMN</keyword>
<keyword id="KW-0503">Monooxygenase</keyword>
<keyword id="KW-0560">Oxidoreductase</keyword>
<proteinExistence type="inferred from homology"/>
<evidence type="ECO:0000255" key="1">
    <source>
        <dbReference type="HAMAP-Rule" id="MF_01229"/>
    </source>
</evidence>